<dbReference type="EMBL" id="CP000948">
    <property type="protein sequence ID" value="ACB05302.1"/>
    <property type="molecule type" value="Genomic_DNA"/>
</dbReference>
<dbReference type="RefSeq" id="WP_000175940.1">
    <property type="nucleotide sequence ID" value="NC_010473.1"/>
</dbReference>
<dbReference type="SMR" id="B1XFI4"/>
<dbReference type="KEGG" id="ecd:ECDH10B_4532"/>
<dbReference type="HOGENOM" id="CLU_002794_2_1_6"/>
<dbReference type="GO" id="GO:0005829">
    <property type="term" value="C:cytosol"/>
    <property type="evidence" value="ECO:0007669"/>
    <property type="project" value="TreeGrafter"/>
</dbReference>
<dbReference type="GO" id="GO:0005525">
    <property type="term" value="F:GTP binding"/>
    <property type="evidence" value="ECO:0007669"/>
    <property type="project" value="UniProtKB-UniRule"/>
</dbReference>
<dbReference type="GO" id="GO:0003924">
    <property type="term" value="F:GTPase activity"/>
    <property type="evidence" value="ECO:0007669"/>
    <property type="project" value="InterPro"/>
</dbReference>
<dbReference type="GO" id="GO:0097216">
    <property type="term" value="F:guanosine tetraphosphate binding"/>
    <property type="evidence" value="ECO:0007669"/>
    <property type="project" value="UniProtKB-ARBA"/>
</dbReference>
<dbReference type="GO" id="GO:0016150">
    <property type="term" value="F:translation release factor activity, codon nonspecific"/>
    <property type="evidence" value="ECO:0007669"/>
    <property type="project" value="TreeGrafter"/>
</dbReference>
<dbReference type="GO" id="GO:0016149">
    <property type="term" value="F:translation release factor activity, codon specific"/>
    <property type="evidence" value="ECO:0007669"/>
    <property type="project" value="UniProtKB-UniRule"/>
</dbReference>
<dbReference type="GO" id="GO:0006449">
    <property type="term" value="P:regulation of translational termination"/>
    <property type="evidence" value="ECO:0007669"/>
    <property type="project" value="UniProtKB-UniRule"/>
</dbReference>
<dbReference type="CDD" id="cd04169">
    <property type="entry name" value="RF3"/>
    <property type="match status" value="1"/>
</dbReference>
<dbReference type="CDD" id="cd03689">
    <property type="entry name" value="RF3_II"/>
    <property type="match status" value="1"/>
</dbReference>
<dbReference type="CDD" id="cd16259">
    <property type="entry name" value="RF3_III"/>
    <property type="match status" value="1"/>
</dbReference>
<dbReference type="FunFam" id="2.40.30.10:FF:000040">
    <property type="entry name" value="Peptide chain release factor 3"/>
    <property type="match status" value="1"/>
</dbReference>
<dbReference type="FunFam" id="3.30.70.3280:FF:000001">
    <property type="entry name" value="Peptide chain release factor 3"/>
    <property type="match status" value="1"/>
</dbReference>
<dbReference type="FunFam" id="3.40.50.300:FF:000184">
    <property type="entry name" value="Peptide chain release factor 3"/>
    <property type="match status" value="1"/>
</dbReference>
<dbReference type="FunFam" id="3.40.50.300:FF:000253">
    <property type="entry name" value="Peptide chain release factor 3"/>
    <property type="match status" value="1"/>
</dbReference>
<dbReference type="Gene3D" id="3.40.50.300">
    <property type="entry name" value="P-loop containing nucleotide triphosphate hydrolases"/>
    <property type="match status" value="3"/>
</dbReference>
<dbReference type="Gene3D" id="3.30.70.3280">
    <property type="entry name" value="Peptide chain release factor 3, domain III"/>
    <property type="match status" value="1"/>
</dbReference>
<dbReference type="HAMAP" id="MF_00072">
    <property type="entry name" value="Rel_fac_3"/>
    <property type="match status" value="1"/>
</dbReference>
<dbReference type="InterPro" id="IPR053905">
    <property type="entry name" value="EF-G-like_DII"/>
</dbReference>
<dbReference type="InterPro" id="IPR035647">
    <property type="entry name" value="EFG_III/V"/>
</dbReference>
<dbReference type="InterPro" id="IPR031157">
    <property type="entry name" value="G_TR_CS"/>
</dbReference>
<dbReference type="InterPro" id="IPR027417">
    <property type="entry name" value="P-loop_NTPase"/>
</dbReference>
<dbReference type="InterPro" id="IPR004548">
    <property type="entry name" value="PrfC"/>
</dbReference>
<dbReference type="InterPro" id="IPR032090">
    <property type="entry name" value="RF3_C"/>
</dbReference>
<dbReference type="InterPro" id="IPR038467">
    <property type="entry name" value="RF3_dom_3_sf"/>
</dbReference>
<dbReference type="InterPro" id="IPR041732">
    <property type="entry name" value="RF3_GTP-bd"/>
</dbReference>
<dbReference type="InterPro" id="IPR005225">
    <property type="entry name" value="Small_GTP-bd"/>
</dbReference>
<dbReference type="InterPro" id="IPR000795">
    <property type="entry name" value="T_Tr_GTP-bd_dom"/>
</dbReference>
<dbReference type="InterPro" id="IPR009000">
    <property type="entry name" value="Transl_B-barrel_sf"/>
</dbReference>
<dbReference type="NCBIfam" id="TIGR00503">
    <property type="entry name" value="prfC"/>
    <property type="match status" value="1"/>
</dbReference>
<dbReference type="NCBIfam" id="NF001964">
    <property type="entry name" value="PRK00741.1"/>
    <property type="match status" value="1"/>
</dbReference>
<dbReference type="NCBIfam" id="TIGR00231">
    <property type="entry name" value="small_GTP"/>
    <property type="match status" value="1"/>
</dbReference>
<dbReference type="PANTHER" id="PTHR43556">
    <property type="entry name" value="PEPTIDE CHAIN RELEASE FACTOR RF3"/>
    <property type="match status" value="1"/>
</dbReference>
<dbReference type="PANTHER" id="PTHR43556:SF2">
    <property type="entry name" value="PEPTIDE CHAIN RELEASE FACTOR RF3"/>
    <property type="match status" value="1"/>
</dbReference>
<dbReference type="Pfam" id="PF22042">
    <property type="entry name" value="EF-G_D2"/>
    <property type="match status" value="1"/>
</dbReference>
<dbReference type="Pfam" id="PF00009">
    <property type="entry name" value="GTP_EFTU"/>
    <property type="match status" value="1"/>
</dbReference>
<dbReference type="Pfam" id="PF16658">
    <property type="entry name" value="RF3_C"/>
    <property type="match status" value="1"/>
</dbReference>
<dbReference type="PRINTS" id="PR00315">
    <property type="entry name" value="ELONGATNFCT"/>
</dbReference>
<dbReference type="SUPFAM" id="SSF54980">
    <property type="entry name" value="EF-G C-terminal domain-like"/>
    <property type="match status" value="1"/>
</dbReference>
<dbReference type="SUPFAM" id="SSF52540">
    <property type="entry name" value="P-loop containing nucleoside triphosphate hydrolases"/>
    <property type="match status" value="1"/>
</dbReference>
<dbReference type="SUPFAM" id="SSF50447">
    <property type="entry name" value="Translation proteins"/>
    <property type="match status" value="1"/>
</dbReference>
<dbReference type="PROSITE" id="PS00301">
    <property type="entry name" value="G_TR_1"/>
    <property type="match status" value="1"/>
</dbReference>
<dbReference type="PROSITE" id="PS51722">
    <property type="entry name" value="G_TR_2"/>
    <property type="match status" value="1"/>
</dbReference>
<protein>
    <recommendedName>
        <fullName evidence="1">Peptide chain release factor 3</fullName>
        <shortName evidence="1">RF-3</shortName>
    </recommendedName>
</protein>
<sequence length="529" mass="59574">MTLSPYLQEVAKRRTFAIISHPDAGKTTITEKVLLFGQAIQTAGTVKGRGSNQHAKSDWMEMEKQRGISITTSVMQFPYHDCLVNLLDTPGHEDFSEDTYRTLTAVDCCLMVIDAAKGVEDRTRKLMEVTRLRDTPILTFMNKLDRDIRDPMELLDEVENELKIGCAPITWPIGCGKLFKGVYHLYKDETYLYQSGKGHTIQEVRIVKGLNNPDLDAAVGEDLAQQLRDELELVKGASNEFDKELFLAGEITPVFFGTALGNFGVDHMLDGLVEWAPAPMPRQTDTRTVEASEDKFTGFVFKIQANMDPKHRDRVAFMRVVSGKYEKGMKLRQVRTAKDVVISDALTFMAGDRSHVEEAYPGDILGLHNHGTIQIGDTFTQGEMMKFTGIPNFAPELFRRIRLKDPLKQKQLLKGLVQLSEEGAVQVFRPISNNDLIVGAVGVLQFDVVVARLKSEYNVEAVYESVNVATARWVECADAKKFEEFKRKNESQLALDGGDNLAYIATSMVNLRLAQERYPDVQFHQTREH</sequence>
<name>RF3_ECODH</name>
<keyword id="KW-0963">Cytoplasm</keyword>
<keyword id="KW-0342">GTP-binding</keyword>
<keyword id="KW-0547">Nucleotide-binding</keyword>
<keyword id="KW-0648">Protein biosynthesis</keyword>
<organism>
    <name type="scientific">Escherichia coli (strain K12 / DH10B)</name>
    <dbReference type="NCBI Taxonomy" id="316385"/>
    <lineage>
        <taxon>Bacteria</taxon>
        <taxon>Pseudomonadati</taxon>
        <taxon>Pseudomonadota</taxon>
        <taxon>Gammaproteobacteria</taxon>
        <taxon>Enterobacterales</taxon>
        <taxon>Enterobacteriaceae</taxon>
        <taxon>Escherichia</taxon>
    </lineage>
</organism>
<accession>B1XFI4</accession>
<feature type="chain" id="PRO_1000092482" description="Peptide chain release factor 3">
    <location>
        <begin position="1"/>
        <end position="529"/>
    </location>
</feature>
<feature type="domain" description="tr-type G">
    <location>
        <begin position="11"/>
        <end position="280"/>
    </location>
</feature>
<feature type="binding site" evidence="1">
    <location>
        <begin position="20"/>
        <end position="27"/>
    </location>
    <ligand>
        <name>GTP</name>
        <dbReference type="ChEBI" id="CHEBI:37565"/>
    </ligand>
</feature>
<feature type="binding site" evidence="1">
    <location>
        <begin position="88"/>
        <end position="92"/>
    </location>
    <ligand>
        <name>GTP</name>
        <dbReference type="ChEBI" id="CHEBI:37565"/>
    </ligand>
</feature>
<feature type="binding site" evidence="1">
    <location>
        <begin position="142"/>
        <end position="145"/>
    </location>
    <ligand>
        <name>GTP</name>
        <dbReference type="ChEBI" id="CHEBI:37565"/>
    </ligand>
</feature>
<gene>
    <name evidence="1" type="primary">prfC</name>
    <name type="ordered locus">ECDH10B_4532</name>
</gene>
<proteinExistence type="inferred from homology"/>
<reference key="1">
    <citation type="journal article" date="2008" name="J. Bacteriol.">
        <title>The complete genome sequence of Escherichia coli DH10B: insights into the biology of a laboratory workhorse.</title>
        <authorList>
            <person name="Durfee T."/>
            <person name="Nelson R."/>
            <person name="Baldwin S."/>
            <person name="Plunkett G. III"/>
            <person name="Burland V."/>
            <person name="Mau B."/>
            <person name="Petrosino J.F."/>
            <person name="Qin X."/>
            <person name="Muzny D.M."/>
            <person name="Ayele M."/>
            <person name="Gibbs R.A."/>
            <person name="Csorgo B."/>
            <person name="Posfai G."/>
            <person name="Weinstock G.M."/>
            <person name="Blattner F.R."/>
        </authorList>
    </citation>
    <scope>NUCLEOTIDE SEQUENCE [LARGE SCALE GENOMIC DNA]</scope>
    <source>
        <strain>K12 / DH10B</strain>
    </source>
</reference>
<comment type="function">
    <text evidence="1">Increases the formation of ribosomal termination complexes and stimulates activities of RF-1 and RF-2. It binds guanine nucleotides and has strong preference for UGA stop codons. It may interact directly with the ribosome. The stimulation of RF-1 and RF-2 is significantly reduced by GTP and GDP, but not by GMP.</text>
</comment>
<comment type="subcellular location">
    <subcellularLocation>
        <location evidence="1">Cytoplasm</location>
    </subcellularLocation>
</comment>
<comment type="similarity">
    <text evidence="1">Belongs to the TRAFAC class translation factor GTPase superfamily. Classic translation factor GTPase family. PrfC subfamily.</text>
</comment>
<evidence type="ECO:0000255" key="1">
    <source>
        <dbReference type="HAMAP-Rule" id="MF_00072"/>
    </source>
</evidence>